<dbReference type="EMBL" id="CP000607">
    <property type="protein sequence ID" value="ABP36280.1"/>
    <property type="molecule type" value="Genomic_DNA"/>
</dbReference>
<dbReference type="SMR" id="A4SCS1"/>
<dbReference type="STRING" id="290318.Cvib_0258"/>
<dbReference type="KEGG" id="pvi:Cvib_0258"/>
<dbReference type="eggNOG" id="COG0094">
    <property type="taxonomic scope" value="Bacteria"/>
</dbReference>
<dbReference type="HOGENOM" id="CLU_061015_2_1_10"/>
<dbReference type="OrthoDB" id="9806626at2"/>
<dbReference type="GO" id="GO:1990904">
    <property type="term" value="C:ribonucleoprotein complex"/>
    <property type="evidence" value="ECO:0007669"/>
    <property type="project" value="UniProtKB-KW"/>
</dbReference>
<dbReference type="GO" id="GO:0005840">
    <property type="term" value="C:ribosome"/>
    <property type="evidence" value="ECO:0007669"/>
    <property type="project" value="UniProtKB-KW"/>
</dbReference>
<dbReference type="GO" id="GO:0019843">
    <property type="term" value="F:rRNA binding"/>
    <property type="evidence" value="ECO:0007669"/>
    <property type="project" value="UniProtKB-UniRule"/>
</dbReference>
<dbReference type="GO" id="GO:0003735">
    <property type="term" value="F:structural constituent of ribosome"/>
    <property type="evidence" value="ECO:0007669"/>
    <property type="project" value="InterPro"/>
</dbReference>
<dbReference type="GO" id="GO:0000049">
    <property type="term" value="F:tRNA binding"/>
    <property type="evidence" value="ECO:0007669"/>
    <property type="project" value="UniProtKB-UniRule"/>
</dbReference>
<dbReference type="GO" id="GO:0006412">
    <property type="term" value="P:translation"/>
    <property type="evidence" value="ECO:0007669"/>
    <property type="project" value="UniProtKB-UniRule"/>
</dbReference>
<dbReference type="FunFam" id="3.30.1440.10:FF:000001">
    <property type="entry name" value="50S ribosomal protein L5"/>
    <property type="match status" value="1"/>
</dbReference>
<dbReference type="Gene3D" id="3.30.1440.10">
    <property type="match status" value="1"/>
</dbReference>
<dbReference type="HAMAP" id="MF_01333_B">
    <property type="entry name" value="Ribosomal_uL5_B"/>
    <property type="match status" value="1"/>
</dbReference>
<dbReference type="InterPro" id="IPR002132">
    <property type="entry name" value="Ribosomal_uL5"/>
</dbReference>
<dbReference type="InterPro" id="IPR020930">
    <property type="entry name" value="Ribosomal_uL5_bac-type"/>
</dbReference>
<dbReference type="InterPro" id="IPR031309">
    <property type="entry name" value="Ribosomal_uL5_C"/>
</dbReference>
<dbReference type="InterPro" id="IPR022803">
    <property type="entry name" value="Ribosomal_uL5_dom_sf"/>
</dbReference>
<dbReference type="InterPro" id="IPR031310">
    <property type="entry name" value="Ribosomal_uL5_N"/>
</dbReference>
<dbReference type="NCBIfam" id="NF000585">
    <property type="entry name" value="PRK00010.1"/>
    <property type="match status" value="1"/>
</dbReference>
<dbReference type="PANTHER" id="PTHR11994">
    <property type="entry name" value="60S RIBOSOMAL PROTEIN L11-RELATED"/>
    <property type="match status" value="1"/>
</dbReference>
<dbReference type="Pfam" id="PF00281">
    <property type="entry name" value="Ribosomal_L5"/>
    <property type="match status" value="1"/>
</dbReference>
<dbReference type="Pfam" id="PF00673">
    <property type="entry name" value="Ribosomal_L5_C"/>
    <property type="match status" value="1"/>
</dbReference>
<dbReference type="PIRSF" id="PIRSF002161">
    <property type="entry name" value="Ribosomal_L5"/>
    <property type="match status" value="1"/>
</dbReference>
<dbReference type="SUPFAM" id="SSF55282">
    <property type="entry name" value="RL5-like"/>
    <property type="match status" value="1"/>
</dbReference>
<protein>
    <recommendedName>
        <fullName evidence="1">Large ribosomal subunit protein uL5</fullName>
    </recommendedName>
    <alternativeName>
        <fullName evidence="2">50S ribosomal protein L5</fullName>
    </alternativeName>
</protein>
<name>RL5_CHLPM</name>
<organism>
    <name type="scientific">Chlorobium phaeovibrioides (strain DSM 265 / 1930)</name>
    <name type="common">Prosthecochloris vibrioformis (strain DSM 265)</name>
    <dbReference type="NCBI Taxonomy" id="290318"/>
    <lineage>
        <taxon>Bacteria</taxon>
        <taxon>Pseudomonadati</taxon>
        <taxon>Chlorobiota</taxon>
        <taxon>Chlorobiia</taxon>
        <taxon>Chlorobiales</taxon>
        <taxon>Chlorobiaceae</taxon>
        <taxon>Chlorobium/Pelodictyon group</taxon>
        <taxon>Chlorobium</taxon>
    </lineage>
</organism>
<reference key="1">
    <citation type="submission" date="2007-03" db="EMBL/GenBank/DDBJ databases">
        <title>Complete sequence of Prosthecochloris vibrioformis DSM 265.</title>
        <authorList>
            <consortium name="US DOE Joint Genome Institute"/>
            <person name="Copeland A."/>
            <person name="Lucas S."/>
            <person name="Lapidus A."/>
            <person name="Barry K."/>
            <person name="Detter J.C."/>
            <person name="Glavina del Rio T."/>
            <person name="Hammon N."/>
            <person name="Israni S."/>
            <person name="Pitluck S."/>
            <person name="Schmutz J."/>
            <person name="Larimer F."/>
            <person name="Land M."/>
            <person name="Hauser L."/>
            <person name="Mikhailova N."/>
            <person name="Li T."/>
            <person name="Overmann J."/>
            <person name="Schuster S.C."/>
            <person name="Bryant D.A."/>
            <person name="Richardson P."/>
        </authorList>
    </citation>
    <scope>NUCLEOTIDE SEQUENCE [LARGE SCALE GENOMIC DNA]</scope>
    <source>
        <strain>DSM 265 / 1930</strain>
    </source>
</reference>
<keyword id="KW-0687">Ribonucleoprotein</keyword>
<keyword id="KW-0689">Ribosomal protein</keyword>
<keyword id="KW-0694">RNA-binding</keyword>
<keyword id="KW-0699">rRNA-binding</keyword>
<keyword id="KW-0820">tRNA-binding</keyword>
<sequence>MAQKKEEAAATPAAPTAARLQTLYHEKVVSALTERFKYDNVMNVPKLKKISINIGVGEAASEPKLLETALQELSQITGQKPQIRKSKKAISNFKLREGQAIGCRVTLRRKAMYEFFDRFVSIAVPRIRDFRGLPDTSFDGRGNYTVGVREQIIFPEIDIDKVPRIQGMDISFVTSATTDEEAFVLLTELGMPFKKKNN</sequence>
<comment type="function">
    <text evidence="1">This is one of the proteins that bind and probably mediate the attachment of the 5S RNA into the large ribosomal subunit, where it forms part of the central protuberance. In the 70S ribosome it contacts protein S13 of the 30S subunit (bridge B1b), connecting the 2 subunits; this bridge is implicated in subunit movement. Contacts the P site tRNA; the 5S rRNA and some of its associated proteins might help stabilize positioning of ribosome-bound tRNAs.</text>
</comment>
<comment type="subunit">
    <text evidence="1">Part of the 50S ribosomal subunit; part of the 5S rRNA/L5/L18/L25 subcomplex. Contacts the 5S rRNA and the P site tRNA. Forms a bridge to the 30S subunit in the 70S ribosome.</text>
</comment>
<comment type="similarity">
    <text evidence="1">Belongs to the universal ribosomal protein uL5 family.</text>
</comment>
<evidence type="ECO:0000255" key="1">
    <source>
        <dbReference type="HAMAP-Rule" id="MF_01333"/>
    </source>
</evidence>
<evidence type="ECO:0000305" key="2"/>
<feature type="chain" id="PRO_1000086600" description="Large ribosomal subunit protein uL5">
    <location>
        <begin position="1"/>
        <end position="198"/>
    </location>
</feature>
<accession>A4SCS1</accession>
<gene>
    <name evidence="1" type="primary">rplE</name>
    <name type="ordered locus">Cvib_0258</name>
</gene>
<proteinExistence type="inferred from homology"/>